<feature type="chain" id="PRO_0000156198" description="Phosphopantetheine adenylyltransferase">
    <location>
        <begin position="1"/>
        <end position="159"/>
    </location>
</feature>
<feature type="binding site" evidence="1">
    <location>
        <begin position="8"/>
        <end position="9"/>
    </location>
    <ligand>
        <name>ATP</name>
        <dbReference type="ChEBI" id="CHEBI:30616"/>
    </ligand>
</feature>
<feature type="binding site" evidence="1">
    <location>
        <position position="8"/>
    </location>
    <ligand>
        <name>substrate</name>
    </ligand>
</feature>
<feature type="binding site" evidence="1">
    <location>
        <position position="16"/>
    </location>
    <ligand>
        <name>ATP</name>
        <dbReference type="ChEBI" id="CHEBI:30616"/>
    </ligand>
</feature>
<feature type="binding site" evidence="1">
    <location>
        <position position="40"/>
    </location>
    <ligand>
        <name>substrate</name>
    </ligand>
</feature>
<feature type="binding site" evidence="1">
    <location>
        <position position="73"/>
    </location>
    <ligand>
        <name>substrate</name>
    </ligand>
</feature>
<feature type="binding site" evidence="1">
    <location>
        <position position="87"/>
    </location>
    <ligand>
        <name>substrate</name>
    </ligand>
</feature>
<feature type="binding site" evidence="1">
    <location>
        <begin position="88"/>
        <end position="90"/>
    </location>
    <ligand>
        <name>ATP</name>
        <dbReference type="ChEBI" id="CHEBI:30616"/>
    </ligand>
</feature>
<feature type="binding site" evidence="1">
    <location>
        <position position="98"/>
    </location>
    <ligand>
        <name>ATP</name>
        <dbReference type="ChEBI" id="CHEBI:30616"/>
    </ligand>
</feature>
<feature type="binding site" evidence="1">
    <location>
        <begin position="122"/>
        <end position="128"/>
    </location>
    <ligand>
        <name>ATP</name>
        <dbReference type="ChEBI" id="CHEBI:30616"/>
    </ligand>
</feature>
<feature type="site" description="Transition state stabilizer" evidence="1">
    <location>
        <position position="16"/>
    </location>
</feature>
<reference key="1">
    <citation type="journal article" date="2003" name="Genome Res.">
        <title>Comparative complete genome sequence analysis of the amino acid replacements responsible for the thermostability of Corynebacterium efficiens.</title>
        <authorList>
            <person name="Nishio Y."/>
            <person name="Nakamura Y."/>
            <person name="Kawarabayasi Y."/>
            <person name="Usuda Y."/>
            <person name="Kimura E."/>
            <person name="Sugimoto S."/>
            <person name="Matsui K."/>
            <person name="Yamagishi A."/>
            <person name="Kikuchi H."/>
            <person name="Ikeo K."/>
            <person name="Gojobori T."/>
        </authorList>
    </citation>
    <scope>NUCLEOTIDE SEQUENCE [LARGE SCALE GENOMIC DNA]</scope>
    <source>
        <strain>DSM 44549 / YS-314 / AJ 12310 / JCM 11189 / NBRC 100395</strain>
    </source>
</reference>
<proteinExistence type="inferred from homology"/>
<evidence type="ECO:0000255" key="1">
    <source>
        <dbReference type="HAMAP-Rule" id="MF_00151"/>
    </source>
</evidence>
<keyword id="KW-0067">ATP-binding</keyword>
<keyword id="KW-0173">Coenzyme A biosynthesis</keyword>
<keyword id="KW-0963">Cytoplasm</keyword>
<keyword id="KW-0460">Magnesium</keyword>
<keyword id="KW-0547">Nucleotide-binding</keyword>
<keyword id="KW-0548">Nucleotidyltransferase</keyword>
<keyword id="KW-1185">Reference proteome</keyword>
<keyword id="KW-0808">Transferase</keyword>
<organism>
    <name type="scientific">Corynebacterium efficiens (strain DSM 44549 / YS-314 / AJ 12310 / JCM 11189 / NBRC 100395)</name>
    <dbReference type="NCBI Taxonomy" id="196164"/>
    <lineage>
        <taxon>Bacteria</taxon>
        <taxon>Bacillati</taxon>
        <taxon>Actinomycetota</taxon>
        <taxon>Actinomycetes</taxon>
        <taxon>Mycobacteriales</taxon>
        <taxon>Corynebacteriaceae</taxon>
        <taxon>Corynebacterium</taxon>
    </lineage>
</organism>
<gene>
    <name evidence="1" type="primary">coaD</name>
    <name type="ordered locus">CE1441</name>
</gene>
<protein>
    <recommendedName>
        <fullName evidence="1">Phosphopantetheine adenylyltransferase</fullName>
        <ecNumber evidence="1">2.7.7.3</ecNumber>
    </recommendedName>
    <alternativeName>
        <fullName evidence="1">Dephospho-CoA pyrophosphorylase</fullName>
    </alternativeName>
    <alternativeName>
        <fullName evidence="1">Pantetheine-phosphate adenylyltransferase</fullName>
        <shortName evidence="1">PPAT</shortName>
    </alternativeName>
</protein>
<sequence length="159" mass="17564">MKAVCPGSFDPITLGHLDIITRAAAQFEEVTVLVTANPNKNSGLFTVEERMDLIRRSTAHLSNVKVDTWATLLVDYTTAHGIGALVKGLRSSLDYEYELPMAQMNRRLSGVDTFFLLTDEKYGYVSSTLCKEVARYGGDVSGLLPEVVVDAVKQKYTQQ</sequence>
<comment type="function">
    <text evidence="1">Reversibly transfers an adenylyl group from ATP to 4'-phosphopantetheine, yielding dephospho-CoA (dPCoA) and pyrophosphate.</text>
</comment>
<comment type="catalytic activity">
    <reaction evidence="1">
        <text>(R)-4'-phosphopantetheine + ATP + H(+) = 3'-dephospho-CoA + diphosphate</text>
        <dbReference type="Rhea" id="RHEA:19801"/>
        <dbReference type="ChEBI" id="CHEBI:15378"/>
        <dbReference type="ChEBI" id="CHEBI:30616"/>
        <dbReference type="ChEBI" id="CHEBI:33019"/>
        <dbReference type="ChEBI" id="CHEBI:57328"/>
        <dbReference type="ChEBI" id="CHEBI:61723"/>
        <dbReference type="EC" id="2.7.7.3"/>
    </reaction>
</comment>
<comment type="cofactor">
    <cofactor evidence="1">
        <name>Mg(2+)</name>
        <dbReference type="ChEBI" id="CHEBI:18420"/>
    </cofactor>
</comment>
<comment type="pathway">
    <text evidence="1">Cofactor biosynthesis; coenzyme A biosynthesis; CoA from (R)-pantothenate: step 4/5.</text>
</comment>
<comment type="subunit">
    <text evidence="1">Homohexamer.</text>
</comment>
<comment type="subcellular location">
    <subcellularLocation>
        <location evidence="1">Cytoplasm</location>
    </subcellularLocation>
</comment>
<comment type="similarity">
    <text evidence="1">Belongs to the bacterial CoaD family.</text>
</comment>
<name>COAD_COREF</name>
<dbReference type="EC" id="2.7.7.3" evidence="1"/>
<dbReference type="EMBL" id="BA000035">
    <property type="protein sequence ID" value="BAC18251.1"/>
    <property type="molecule type" value="Genomic_DNA"/>
</dbReference>
<dbReference type="RefSeq" id="WP_006769403.1">
    <property type="nucleotide sequence ID" value="NC_004369.1"/>
</dbReference>
<dbReference type="SMR" id="Q8FPP9"/>
<dbReference type="STRING" id="196164.gene:10741855"/>
<dbReference type="KEGG" id="cef:CE1441"/>
<dbReference type="eggNOG" id="COG0669">
    <property type="taxonomic scope" value="Bacteria"/>
</dbReference>
<dbReference type="HOGENOM" id="CLU_100149_1_0_11"/>
<dbReference type="OrthoDB" id="9806661at2"/>
<dbReference type="UniPathway" id="UPA00241">
    <property type="reaction ID" value="UER00355"/>
</dbReference>
<dbReference type="Proteomes" id="UP000001409">
    <property type="component" value="Chromosome"/>
</dbReference>
<dbReference type="GO" id="GO:0005737">
    <property type="term" value="C:cytoplasm"/>
    <property type="evidence" value="ECO:0007669"/>
    <property type="project" value="UniProtKB-SubCell"/>
</dbReference>
<dbReference type="GO" id="GO:0005524">
    <property type="term" value="F:ATP binding"/>
    <property type="evidence" value="ECO:0007669"/>
    <property type="project" value="UniProtKB-KW"/>
</dbReference>
<dbReference type="GO" id="GO:0004595">
    <property type="term" value="F:pantetheine-phosphate adenylyltransferase activity"/>
    <property type="evidence" value="ECO:0007669"/>
    <property type="project" value="UniProtKB-UniRule"/>
</dbReference>
<dbReference type="GO" id="GO:0015937">
    <property type="term" value="P:coenzyme A biosynthetic process"/>
    <property type="evidence" value="ECO:0007669"/>
    <property type="project" value="UniProtKB-UniRule"/>
</dbReference>
<dbReference type="CDD" id="cd02163">
    <property type="entry name" value="PPAT"/>
    <property type="match status" value="1"/>
</dbReference>
<dbReference type="Gene3D" id="3.40.50.620">
    <property type="entry name" value="HUPs"/>
    <property type="match status" value="1"/>
</dbReference>
<dbReference type="HAMAP" id="MF_00151">
    <property type="entry name" value="PPAT_bact"/>
    <property type="match status" value="1"/>
</dbReference>
<dbReference type="InterPro" id="IPR004821">
    <property type="entry name" value="Cyt_trans-like"/>
</dbReference>
<dbReference type="InterPro" id="IPR001980">
    <property type="entry name" value="PPAT"/>
</dbReference>
<dbReference type="InterPro" id="IPR014729">
    <property type="entry name" value="Rossmann-like_a/b/a_fold"/>
</dbReference>
<dbReference type="NCBIfam" id="TIGR01510">
    <property type="entry name" value="coaD_prev_kdtB"/>
    <property type="match status" value="1"/>
</dbReference>
<dbReference type="NCBIfam" id="TIGR00125">
    <property type="entry name" value="cyt_tran_rel"/>
    <property type="match status" value="1"/>
</dbReference>
<dbReference type="PANTHER" id="PTHR21342">
    <property type="entry name" value="PHOSPHOPANTETHEINE ADENYLYLTRANSFERASE"/>
    <property type="match status" value="1"/>
</dbReference>
<dbReference type="PANTHER" id="PTHR21342:SF1">
    <property type="entry name" value="PHOSPHOPANTETHEINE ADENYLYLTRANSFERASE"/>
    <property type="match status" value="1"/>
</dbReference>
<dbReference type="Pfam" id="PF01467">
    <property type="entry name" value="CTP_transf_like"/>
    <property type="match status" value="1"/>
</dbReference>
<dbReference type="PRINTS" id="PR01020">
    <property type="entry name" value="LPSBIOSNTHSS"/>
</dbReference>
<dbReference type="SUPFAM" id="SSF52374">
    <property type="entry name" value="Nucleotidylyl transferase"/>
    <property type="match status" value="1"/>
</dbReference>
<accession>Q8FPP9</accession>